<gene>
    <name evidence="1" type="primary">tmcAL</name>
    <name type="ordered locus">BCE33L3684</name>
</gene>
<accession>Q636A1</accession>
<dbReference type="EC" id="6.3.4.-" evidence="1"/>
<dbReference type="EMBL" id="CP000001">
    <property type="protein sequence ID" value="AAU16582.1"/>
    <property type="molecule type" value="Genomic_DNA"/>
</dbReference>
<dbReference type="RefSeq" id="WP_001187915.1">
    <property type="nucleotide sequence ID" value="NZ_CP009968.1"/>
</dbReference>
<dbReference type="SMR" id="Q636A1"/>
<dbReference type="KEGG" id="bcz:BCE33L3684"/>
<dbReference type="PATRIC" id="fig|288681.22.peg.1727"/>
<dbReference type="Proteomes" id="UP000002612">
    <property type="component" value="Chromosome"/>
</dbReference>
<dbReference type="GO" id="GO:0005737">
    <property type="term" value="C:cytoplasm"/>
    <property type="evidence" value="ECO:0007669"/>
    <property type="project" value="UniProtKB-SubCell"/>
</dbReference>
<dbReference type="GO" id="GO:0005524">
    <property type="term" value="F:ATP binding"/>
    <property type="evidence" value="ECO:0007669"/>
    <property type="project" value="UniProtKB-KW"/>
</dbReference>
<dbReference type="GO" id="GO:0016879">
    <property type="term" value="F:ligase activity, forming carbon-nitrogen bonds"/>
    <property type="evidence" value="ECO:0007669"/>
    <property type="project" value="UniProtKB-UniRule"/>
</dbReference>
<dbReference type="GO" id="GO:0000049">
    <property type="term" value="F:tRNA binding"/>
    <property type="evidence" value="ECO:0007669"/>
    <property type="project" value="UniProtKB-KW"/>
</dbReference>
<dbReference type="GO" id="GO:0006400">
    <property type="term" value="P:tRNA modification"/>
    <property type="evidence" value="ECO:0007669"/>
    <property type="project" value="UniProtKB-UniRule"/>
</dbReference>
<dbReference type="Gene3D" id="3.40.50.620">
    <property type="entry name" value="HUPs"/>
    <property type="match status" value="1"/>
</dbReference>
<dbReference type="HAMAP" id="MF_01539">
    <property type="entry name" value="TmcAL"/>
    <property type="match status" value="1"/>
</dbReference>
<dbReference type="InterPro" id="IPR014729">
    <property type="entry name" value="Rossmann-like_a/b/a_fold"/>
</dbReference>
<dbReference type="InterPro" id="IPR008513">
    <property type="entry name" value="tRNA(Met)_cyd_acetate_ligase"/>
</dbReference>
<dbReference type="NCBIfam" id="NF010191">
    <property type="entry name" value="PRK13670.1"/>
    <property type="match status" value="1"/>
</dbReference>
<dbReference type="PANTHER" id="PTHR37825">
    <property type="entry name" value="TRNA(MET) CYTIDINE ACETATE LIGASE"/>
    <property type="match status" value="1"/>
</dbReference>
<dbReference type="PANTHER" id="PTHR37825:SF1">
    <property type="entry name" value="TRNA(MET) CYTIDINE ACETATE LIGASE"/>
    <property type="match status" value="1"/>
</dbReference>
<dbReference type="Pfam" id="PF05636">
    <property type="entry name" value="HIGH_NTase1"/>
    <property type="match status" value="1"/>
</dbReference>
<dbReference type="SUPFAM" id="SSF52374">
    <property type="entry name" value="Nucleotidylyl transferase"/>
    <property type="match status" value="1"/>
</dbReference>
<evidence type="ECO:0000255" key="1">
    <source>
        <dbReference type="HAMAP-Rule" id="MF_01539"/>
    </source>
</evidence>
<feature type="chain" id="PRO_0000147155" description="tRNA(Met) cytidine acetate ligase">
    <location>
        <begin position="1"/>
        <end position="393"/>
    </location>
</feature>
<feature type="binding site" evidence="1">
    <location>
        <position position="81"/>
    </location>
    <ligand>
        <name>ATP</name>
        <dbReference type="ChEBI" id="CHEBI:30616"/>
    </ligand>
</feature>
<feature type="binding site" evidence="1">
    <location>
        <position position="142"/>
    </location>
    <ligand>
        <name>ATP</name>
        <dbReference type="ChEBI" id="CHEBI:30616"/>
    </ligand>
</feature>
<feature type="binding site" evidence="1">
    <location>
        <position position="167"/>
    </location>
    <ligand>
        <name>ATP</name>
        <dbReference type="ChEBI" id="CHEBI:30616"/>
    </ligand>
</feature>
<organism>
    <name type="scientific">Bacillus cereus (strain ZK / E33L)</name>
    <dbReference type="NCBI Taxonomy" id="288681"/>
    <lineage>
        <taxon>Bacteria</taxon>
        <taxon>Bacillati</taxon>
        <taxon>Bacillota</taxon>
        <taxon>Bacilli</taxon>
        <taxon>Bacillales</taxon>
        <taxon>Bacillaceae</taxon>
        <taxon>Bacillus</taxon>
        <taxon>Bacillus cereus group</taxon>
    </lineage>
</organism>
<sequence length="393" mass="45256">MQQTKKLTHSDITIAVMSGPFLQRGEPALVSKWYRTKMALACGVDLVVELPYAFSTQKAETFANGAISILNALHVSEICFGSEDGQIENFYNTVSAQKNEEETFNRLVKQFMNAGNSYAKATSEAFLHILSSEKNIDMSQPNNILGFQYIKAILMQNSSMQAQTIKRFASHYHDETFNDQHIASATSIRKQLFSENSSFTEIESFIPKATASLLASYKQNYGTLHNWEQYFSFFKYKLMTMSPKDLQHIYEIEEGLEHRILSKIQTSSSFHSFMEALKTKRYTWTRLQRACTHILTNTTKEEIHCANIEQHAPYIRLLGMSQKGQTYLSKNKKKIELPILTHTKTFDHPTLHIERKANSVYFSIMKEPLRTQLLKRDATHHPIRYDETTAKFL</sequence>
<reference key="1">
    <citation type="journal article" date="2006" name="J. Bacteriol.">
        <title>Pathogenomic sequence analysis of Bacillus cereus and Bacillus thuringiensis isolates closely related to Bacillus anthracis.</title>
        <authorList>
            <person name="Han C.S."/>
            <person name="Xie G."/>
            <person name="Challacombe J.F."/>
            <person name="Altherr M.R."/>
            <person name="Bhotika S.S."/>
            <person name="Bruce D."/>
            <person name="Campbell C.S."/>
            <person name="Campbell M.L."/>
            <person name="Chen J."/>
            <person name="Chertkov O."/>
            <person name="Cleland C."/>
            <person name="Dimitrijevic M."/>
            <person name="Doggett N.A."/>
            <person name="Fawcett J.J."/>
            <person name="Glavina T."/>
            <person name="Goodwin L.A."/>
            <person name="Hill K.K."/>
            <person name="Hitchcock P."/>
            <person name="Jackson P.J."/>
            <person name="Keim P."/>
            <person name="Kewalramani A.R."/>
            <person name="Longmire J."/>
            <person name="Lucas S."/>
            <person name="Malfatti S."/>
            <person name="McMurry K."/>
            <person name="Meincke L.J."/>
            <person name="Misra M."/>
            <person name="Moseman B.L."/>
            <person name="Mundt M."/>
            <person name="Munk A.C."/>
            <person name="Okinaka R.T."/>
            <person name="Parson-Quintana B."/>
            <person name="Reilly L.P."/>
            <person name="Richardson P."/>
            <person name="Robinson D.L."/>
            <person name="Rubin E."/>
            <person name="Saunders E."/>
            <person name="Tapia R."/>
            <person name="Tesmer J.G."/>
            <person name="Thayer N."/>
            <person name="Thompson L.S."/>
            <person name="Tice H."/>
            <person name="Ticknor L.O."/>
            <person name="Wills P.L."/>
            <person name="Brettin T.S."/>
            <person name="Gilna P."/>
        </authorList>
    </citation>
    <scope>NUCLEOTIDE SEQUENCE [LARGE SCALE GENOMIC DNA]</scope>
    <source>
        <strain>ZK / E33L</strain>
    </source>
</reference>
<protein>
    <recommendedName>
        <fullName evidence="1">tRNA(Met) cytidine acetate ligase</fullName>
        <ecNumber evidence="1">6.3.4.-</ecNumber>
    </recommendedName>
</protein>
<keyword id="KW-0067">ATP-binding</keyword>
<keyword id="KW-0963">Cytoplasm</keyword>
<keyword id="KW-0436">Ligase</keyword>
<keyword id="KW-0547">Nucleotide-binding</keyword>
<keyword id="KW-0694">RNA-binding</keyword>
<keyword id="KW-0819">tRNA processing</keyword>
<keyword id="KW-0820">tRNA-binding</keyword>
<name>TMCAL_BACCZ</name>
<comment type="function">
    <text evidence="1">Catalyzes the formation of N(4)-acetylcytidine (ac(4)C) at the wobble position of elongator tRNA(Met), using acetate and ATP as substrates. First activates an acetate ion to form acetyladenylate (Ac-AMP) and then transfers the acetyl group to tRNA to form ac(4)C34.</text>
</comment>
<comment type="catalytic activity">
    <reaction evidence="1">
        <text>cytidine(34) in elongator tRNA(Met) + acetate + ATP = N(4)-acetylcytidine(34) in elongator tRNA(Met) + AMP + diphosphate</text>
        <dbReference type="Rhea" id="RHEA:58144"/>
        <dbReference type="Rhea" id="RHEA-COMP:10693"/>
        <dbReference type="Rhea" id="RHEA-COMP:10694"/>
        <dbReference type="ChEBI" id="CHEBI:30089"/>
        <dbReference type="ChEBI" id="CHEBI:30616"/>
        <dbReference type="ChEBI" id="CHEBI:33019"/>
        <dbReference type="ChEBI" id="CHEBI:74900"/>
        <dbReference type="ChEBI" id="CHEBI:82748"/>
        <dbReference type="ChEBI" id="CHEBI:456215"/>
    </reaction>
</comment>
<comment type="subcellular location">
    <subcellularLocation>
        <location evidence="1">Cytoplasm</location>
    </subcellularLocation>
</comment>
<comment type="similarity">
    <text evidence="1">Belongs to the TmcAL family.</text>
</comment>
<proteinExistence type="inferred from homology"/>